<dbReference type="EMBL" id="AE005174">
    <property type="protein sequence ID" value="AAG55023.1"/>
    <property type="molecule type" value="Genomic_DNA"/>
</dbReference>
<dbReference type="PIR" id="C85570">
    <property type="entry name" value="C85570"/>
</dbReference>
<dbReference type="SMR" id="P0AAU6"/>
<dbReference type="KEGG" id="ece:Z0849"/>
<dbReference type="OMA" id="EDIMYDV"/>
<dbReference type="Proteomes" id="UP000002519">
    <property type="component" value="Chromosome"/>
</dbReference>
<dbReference type="GO" id="GO:0005886">
    <property type="term" value="C:plasma membrane"/>
    <property type="evidence" value="ECO:0007669"/>
    <property type="project" value="UniProtKB-SubCell"/>
</dbReference>
<organism>
    <name type="scientific">Escherichia coli O157:H7</name>
    <dbReference type="NCBI Taxonomy" id="83334"/>
    <lineage>
        <taxon>Bacteria</taxon>
        <taxon>Pseudomonadati</taxon>
        <taxon>Pseudomonadota</taxon>
        <taxon>Gammaproteobacteria</taxon>
        <taxon>Enterobacterales</taxon>
        <taxon>Enterobacteriaceae</taxon>
        <taxon>Escherichia</taxon>
    </lineage>
</organism>
<accession>P0AAU6</accession>
<accession>P28914</accession>
<reference key="1">
    <citation type="journal article" date="2001" name="Nature">
        <title>Genome sequence of enterohaemorrhagic Escherichia coli O157:H7.</title>
        <authorList>
            <person name="Perna N.T."/>
            <person name="Plunkett G. III"/>
            <person name="Burland V."/>
            <person name="Mau B."/>
            <person name="Glasner J.D."/>
            <person name="Rose D.J."/>
            <person name="Mayhew G.F."/>
            <person name="Evans P.S."/>
            <person name="Gregor J."/>
            <person name="Kirkpatrick H.A."/>
            <person name="Posfai G."/>
            <person name="Hackett J."/>
            <person name="Klink S."/>
            <person name="Boutin A."/>
            <person name="Shao Y."/>
            <person name="Miller L."/>
            <person name="Grotbeck E.J."/>
            <person name="Davis N.W."/>
            <person name="Lim A."/>
            <person name="Dimalanta E.T."/>
            <person name="Potamousis K."/>
            <person name="Apodaca J."/>
            <person name="Anantharaman T.S."/>
            <person name="Lin J."/>
            <person name="Yen G."/>
            <person name="Schwartz D.C."/>
            <person name="Welch R.A."/>
            <person name="Blattner F.R."/>
        </authorList>
    </citation>
    <scope>NUCLEOTIDE SEQUENCE [LARGE SCALE GENOMIC DNA]</scope>
    <source>
        <strain>O157:H7 / EDL933 / ATCC 700927 / EHEC</strain>
    </source>
</reference>
<protein>
    <recommendedName>
        <fullName>Uncharacterized protein YbfB</fullName>
    </recommendedName>
</protein>
<evidence type="ECO:0000255" key="1"/>
<evidence type="ECO:0000305" key="2"/>
<gene>
    <name type="primary">ybfB</name>
    <name type="ordered locus">Z0849</name>
</gene>
<proteinExistence type="predicted"/>
<name>YBFB_ECO57</name>
<comment type="subcellular location">
    <subcellularLocation>
        <location evidence="2">Cell membrane</location>
        <topology evidence="2">Multi-pass membrane protein</topology>
    </subcellularLocation>
</comment>
<feature type="chain" id="PRO_0000168686" description="Uncharacterized protein YbfB">
    <location>
        <begin position="1"/>
        <end position="108"/>
    </location>
</feature>
<feature type="transmembrane region" description="Helical" evidence="1">
    <location>
        <begin position="4"/>
        <end position="24"/>
    </location>
</feature>
<feature type="transmembrane region" description="Helical" evidence="1">
    <location>
        <begin position="46"/>
        <end position="66"/>
    </location>
</feature>
<feature type="transmembrane region" description="Helical" evidence="1">
    <location>
        <begin position="81"/>
        <end position="101"/>
    </location>
</feature>
<keyword id="KW-1003">Cell membrane</keyword>
<keyword id="KW-0472">Membrane</keyword>
<keyword id="KW-0812">Transmembrane</keyword>
<keyword id="KW-1133">Transmembrane helix</keyword>
<sequence length="108" mass="12557">MKYIIFLFRAIWLALSLLILFFSMHRLSLLDSTRDVSELISLMSYGMMVICFPTGIVFFIALIFIGTVSDIIGVRIDSKYIMAIIIWLYFLSGGYIQWFVLSKRIINK</sequence>